<gene>
    <name type="ORF">DDB_G0269062</name>
</gene>
<proteinExistence type="inferred from homology"/>
<sequence>MKENHLLNLKVMRLSKPNIPTINPILCEKQDLPYETMSTSIDSTSLSMGSVNSSGSNDNNQLIGNNGNPINMEGLGVTSMLQLQSGVIYLGEMFCCYISLNNHSPYQVRNVFLKVELQTTSSRIPLLDSEQQSVPTFNPGFSSDFVVQREVKESGVNILVCAVNYTTPEGEQKKFRKYFKFQVLNPLVLKTRIHNLPNVVFLEACLENATQGSLFIESILFEPIEHFNSKDISFENSLDDNNNLDNNNNNLENDNNLNNLEFKLNEKGLIENTDELLENIKLTTSDNIVFLKQGCSRQYLFQITPKDIENVESKNSLPLGRLDITWRSYFGEIGRLKTAAIQRKLNQEDIECSLINIPDKIKLEKPFSVIAKLSNKSNRILYPQFMLVRNKMDGIKINSHLPKLDPIQPNSIIQVEIEMFPLKPGMQQIIGLAIKLLDPPVIGITPTTSSSQQQQPISKPTLGQVLQQTQQSQIQQQQQQQNQQLQPPKNFYEFNAVDTWVEFADSKLVDI</sequence>
<evidence type="ECO:0000305" key="1"/>
<accession>Q55EX6</accession>
<protein>
    <recommendedName>
        <fullName>Trafficking protein particle complex subunit 13 homolog</fullName>
    </recommendedName>
</protein>
<feature type="chain" id="PRO_0000321557" description="Trafficking protein particle complex subunit 13 homolog">
    <location>
        <begin position="1"/>
        <end position="511"/>
    </location>
</feature>
<dbReference type="EMBL" id="AAFI02000004">
    <property type="protein sequence ID" value="EAL73120.2"/>
    <property type="molecule type" value="Genomic_DNA"/>
</dbReference>
<dbReference type="RefSeq" id="XP_646894.2">
    <property type="nucleotide sequence ID" value="XM_641802.2"/>
</dbReference>
<dbReference type="FunCoup" id="Q55EX6">
    <property type="interactions" value="83"/>
</dbReference>
<dbReference type="STRING" id="44689.Q55EX6"/>
<dbReference type="GlyGen" id="Q55EX6">
    <property type="glycosylation" value="1 site"/>
</dbReference>
<dbReference type="PaxDb" id="44689-DDB0252840"/>
<dbReference type="EnsemblProtists" id="EAL73120">
    <property type="protein sequence ID" value="EAL73120"/>
    <property type="gene ID" value="DDB_G0269062"/>
</dbReference>
<dbReference type="GeneID" id="8616579"/>
<dbReference type="KEGG" id="ddi:DDB_G0269062"/>
<dbReference type="dictyBase" id="DDB_G0269062"/>
<dbReference type="VEuPathDB" id="AmoebaDB:DDB_G0269062"/>
<dbReference type="eggNOG" id="KOG2625">
    <property type="taxonomic scope" value="Eukaryota"/>
</dbReference>
<dbReference type="HOGENOM" id="CLU_027041_0_0_1"/>
<dbReference type="InParanoid" id="Q55EX6"/>
<dbReference type="OMA" id="YLCVHNG"/>
<dbReference type="PhylomeDB" id="Q55EX6"/>
<dbReference type="Reactome" id="R-DDI-8876198">
    <property type="pathway name" value="RAB GEFs exchange GTP for GDP on RABs"/>
</dbReference>
<dbReference type="PRO" id="PR:Q55EX6"/>
<dbReference type="Proteomes" id="UP000002195">
    <property type="component" value="Chromosome 1"/>
</dbReference>
<dbReference type="GO" id="GO:1990072">
    <property type="term" value="C:TRAPPIII protein complex"/>
    <property type="evidence" value="ECO:0000318"/>
    <property type="project" value="GO_Central"/>
</dbReference>
<dbReference type="InterPro" id="IPR010378">
    <property type="entry name" value="TRAPPC13"/>
</dbReference>
<dbReference type="InterPro" id="IPR055428">
    <property type="entry name" value="TRAPPC13_C"/>
</dbReference>
<dbReference type="InterPro" id="IPR055429">
    <property type="entry name" value="TRAPPC13_M"/>
</dbReference>
<dbReference type="InterPro" id="IPR055427">
    <property type="entry name" value="TRAPPC13_N"/>
</dbReference>
<dbReference type="PANTHER" id="PTHR13134">
    <property type="entry name" value="TRAFFICKING PROTEIN PARTICLE COMPLEX SUBUNIT 13"/>
    <property type="match status" value="1"/>
</dbReference>
<dbReference type="PANTHER" id="PTHR13134:SF3">
    <property type="entry name" value="TRAFFICKING PROTEIN PARTICLE COMPLEX SUBUNIT 13"/>
    <property type="match status" value="1"/>
</dbReference>
<dbReference type="Pfam" id="PF23643">
    <property type="entry name" value="TRAPPC13_C"/>
    <property type="match status" value="1"/>
</dbReference>
<dbReference type="Pfam" id="PF23647">
    <property type="entry name" value="TRAPPC13_M"/>
    <property type="match status" value="2"/>
</dbReference>
<dbReference type="Pfam" id="PF06159">
    <property type="entry name" value="TRAPPC13_N"/>
    <property type="match status" value="1"/>
</dbReference>
<name>TPC13_DICDI</name>
<comment type="similarity">
    <text evidence="1">Belongs to the TRAPPC13 family.</text>
</comment>
<organism>
    <name type="scientific">Dictyostelium discoideum</name>
    <name type="common">Social amoeba</name>
    <dbReference type="NCBI Taxonomy" id="44689"/>
    <lineage>
        <taxon>Eukaryota</taxon>
        <taxon>Amoebozoa</taxon>
        <taxon>Evosea</taxon>
        <taxon>Eumycetozoa</taxon>
        <taxon>Dictyostelia</taxon>
        <taxon>Dictyosteliales</taxon>
        <taxon>Dictyosteliaceae</taxon>
        <taxon>Dictyostelium</taxon>
    </lineage>
</organism>
<keyword id="KW-1185">Reference proteome</keyword>
<reference key="1">
    <citation type="journal article" date="2005" name="Nature">
        <title>The genome of the social amoeba Dictyostelium discoideum.</title>
        <authorList>
            <person name="Eichinger L."/>
            <person name="Pachebat J.A."/>
            <person name="Gloeckner G."/>
            <person name="Rajandream M.A."/>
            <person name="Sucgang R."/>
            <person name="Berriman M."/>
            <person name="Song J."/>
            <person name="Olsen R."/>
            <person name="Szafranski K."/>
            <person name="Xu Q."/>
            <person name="Tunggal B."/>
            <person name="Kummerfeld S."/>
            <person name="Madera M."/>
            <person name="Konfortov B.A."/>
            <person name="Rivero F."/>
            <person name="Bankier A.T."/>
            <person name="Lehmann R."/>
            <person name="Hamlin N."/>
            <person name="Davies R."/>
            <person name="Gaudet P."/>
            <person name="Fey P."/>
            <person name="Pilcher K."/>
            <person name="Chen G."/>
            <person name="Saunders D."/>
            <person name="Sodergren E.J."/>
            <person name="Davis P."/>
            <person name="Kerhornou A."/>
            <person name="Nie X."/>
            <person name="Hall N."/>
            <person name="Anjard C."/>
            <person name="Hemphill L."/>
            <person name="Bason N."/>
            <person name="Farbrother P."/>
            <person name="Desany B."/>
            <person name="Just E."/>
            <person name="Morio T."/>
            <person name="Rost R."/>
            <person name="Churcher C.M."/>
            <person name="Cooper J."/>
            <person name="Haydock S."/>
            <person name="van Driessche N."/>
            <person name="Cronin A."/>
            <person name="Goodhead I."/>
            <person name="Muzny D.M."/>
            <person name="Mourier T."/>
            <person name="Pain A."/>
            <person name="Lu M."/>
            <person name="Harper D."/>
            <person name="Lindsay R."/>
            <person name="Hauser H."/>
            <person name="James K.D."/>
            <person name="Quiles M."/>
            <person name="Madan Babu M."/>
            <person name="Saito T."/>
            <person name="Buchrieser C."/>
            <person name="Wardroper A."/>
            <person name="Felder M."/>
            <person name="Thangavelu M."/>
            <person name="Johnson D."/>
            <person name="Knights A."/>
            <person name="Loulseged H."/>
            <person name="Mungall K.L."/>
            <person name="Oliver K."/>
            <person name="Price C."/>
            <person name="Quail M.A."/>
            <person name="Urushihara H."/>
            <person name="Hernandez J."/>
            <person name="Rabbinowitsch E."/>
            <person name="Steffen D."/>
            <person name="Sanders M."/>
            <person name="Ma J."/>
            <person name="Kohara Y."/>
            <person name="Sharp S."/>
            <person name="Simmonds M.N."/>
            <person name="Spiegler S."/>
            <person name="Tivey A."/>
            <person name="Sugano S."/>
            <person name="White B."/>
            <person name="Walker D."/>
            <person name="Woodward J.R."/>
            <person name="Winckler T."/>
            <person name="Tanaka Y."/>
            <person name="Shaulsky G."/>
            <person name="Schleicher M."/>
            <person name="Weinstock G.M."/>
            <person name="Rosenthal A."/>
            <person name="Cox E.C."/>
            <person name="Chisholm R.L."/>
            <person name="Gibbs R.A."/>
            <person name="Loomis W.F."/>
            <person name="Platzer M."/>
            <person name="Kay R.R."/>
            <person name="Williams J.G."/>
            <person name="Dear P.H."/>
            <person name="Noegel A.A."/>
            <person name="Barrell B.G."/>
            <person name="Kuspa A."/>
        </authorList>
    </citation>
    <scope>NUCLEOTIDE SEQUENCE [LARGE SCALE GENOMIC DNA]</scope>
    <source>
        <strain>AX4</strain>
    </source>
</reference>